<keyword id="KW-0158">Chromosome</keyword>
<keyword id="KW-0217">Developmental protein</keyword>
<keyword id="KW-0221">Differentiation</keyword>
<keyword id="KW-0903">Direct protein sequencing</keyword>
<keyword id="KW-0238">DNA-binding</keyword>
<keyword id="KW-0544">Nucleosome core</keyword>
<keyword id="KW-0539">Nucleus</keyword>
<keyword id="KW-0744">Spermatogenesis</keyword>
<name>SSS1_SCYCA</name>
<evidence type="ECO:0000256" key="1">
    <source>
        <dbReference type="SAM" id="MobiDB-lite"/>
    </source>
</evidence>
<protein>
    <recommendedName>
        <fullName>Spermatid-specific protein S1</fullName>
    </recommendedName>
</protein>
<dbReference type="PIR" id="S00180">
    <property type="entry name" value="S00180"/>
</dbReference>
<dbReference type="SMR" id="P13275"/>
<dbReference type="GO" id="GO:0000786">
    <property type="term" value="C:nucleosome"/>
    <property type="evidence" value="ECO:0007669"/>
    <property type="project" value="UniProtKB-KW"/>
</dbReference>
<dbReference type="GO" id="GO:0005634">
    <property type="term" value="C:nucleus"/>
    <property type="evidence" value="ECO:0007669"/>
    <property type="project" value="UniProtKB-SubCell"/>
</dbReference>
<dbReference type="GO" id="GO:0003677">
    <property type="term" value="F:DNA binding"/>
    <property type="evidence" value="ECO:0007669"/>
    <property type="project" value="UniProtKB-KW"/>
</dbReference>
<dbReference type="GO" id="GO:0030154">
    <property type="term" value="P:cell differentiation"/>
    <property type="evidence" value="ECO:0007669"/>
    <property type="project" value="UniProtKB-KW"/>
</dbReference>
<dbReference type="GO" id="GO:0007283">
    <property type="term" value="P:spermatogenesis"/>
    <property type="evidence" value="ECO:0007669"/>
    <property type="project" value="UniProtKB-KW"/>
</dbReference>
<comment type="function">
    <text>Involved in nuclear basic protein transition: histones are replaced by spermatid specific proteins which are themselves replaced by protamines in late spermatids.</text>
</comment>
<comment type="subcellular location">
    <subcellularLocation>
        <location>Nucleus</location>
    </subcellularLocation>
    <subcellularLocation>
        <location>Chromosome</location>
    </subcellularLocation>
</comment>
<reference key="1">
    <citation type="journal article" date="1987" name="Eur. J. Biochem.">
        <title>Nuclear basic protein transition during sperm differentiation. Amino acid sequence of a spermatid-specific protein from the dog-fish Scylliorhinus caniculus.</title>
        <authorList>
            <person name="Chauviere M."/>
            <person name="Martinage A."/>
            <person name="Briand G."/>
            <person name="Sautiere P."/>
            <person name="Chevaillier P."/>
        </authorList>
    </citation>
    <scope>PROTEIN SEQUENCE</scope>
</reference>
<sequence>TKSRYRNRRSRPRRRYGRRMRKTRCRRKGRRISRRPRHTTYRRRVRKIVHLKRRSRPRDEIDNLKVKNNRRLNESLKQHRLPMRVPV</sequence>
<organism>
    <name type="scientific">Scyliorhinus canicula</name>
    <name type="common">Small-spotted catshark</name>
    <name type="synonym">Squalus canicula</name>
    <dbReference type="NCBI Taxonomy" id="7830"/>
    <lineage>
        <taxon>Eukaryota</taxon>
        <taxon>Metazoa</taxon>
        <taxon>Chordata</taxon>
        <taxon>Craniata</taxon>
        <taxon>Vertebrata</taxon>
        <taxon>Chondrichthyes</taxon>
        <taxon>Elasmobranchii</taxon>
        <taxon>Galeomorphii</taxon>
        <taxon>Galeoidea</taxon>
        <taxon>Carcharhiniformes</taxon>
        <taxon>Scyliorhinidae</taxon>
        <taxon>Scyliorhinus</taxon>
    </lineage>
</organism>
<proteinExistence type="evidence at protein level"/>
<feature type="chain" id="PRO_0000106632" description="Spermatid-specific protein S1">
    <location>
        <begin position="1"/>
        <end position="87"/>
    </location>
</feature>
<feature type="region of interest" description="Disordered" evidence="1">
    <location>
        <begin position="1"/>
        <end position="36"/>
    </location>
</feature>
<accession>P13275</accession>